<accession>Q1CKQ9</accession>
<accession>C4GR23</accession>
<gene>
    <name evidence="1" type="primary">rlmH</name>
    <name type="ordered locus">YPN_1090</name>
    <name type="ORF">YP516_1184</name>
</gene>
<organism>
    <name type="scientific">Yersinia pestis bv. Antiqua (strain Nepal516)</name>
    <dbReference type="NCBI Taxonomy" id="377628"/>
    <lineage>
        <taxon>Bacteria</taxon>
        <taxon>Pseudomonadati</taxon>
        <taxon>Pseudomonadota</taxon>
        <taxon>Gammaproteobacteria</taxon>
        <taxon>Enterobacterales</taxon>
        <taxon>Yersiniaceae</taxon>
        <taxon>Yersinia</taxon>
    </lineage>
</organism>
<proteinExistence type="inferred from homology"/>
<comment type="function">
    <text evidence="1">Specifically methylates the pseudouridine at position 1915 (m3Psi1915) in 23S rRNA.</text>
</comment>
<comment type="catalytic activity">
    <reaction evidence="1">
        <text>pseudouridine(1915) in 23S rRNA + S-adenosyl-L-methionine = N(3)-methylpseudouridine(1915) in 23S rRNA + S-adenosyl-L-homocysteine + H(+)</text>
        <dbReference type="Rhea" id="RHEA:42752"/>
        <dbReference type="Rhea" id="RHEA-COMP:10221"/>
        <dbReference type="Rhea" id="RHEA-COMP:10222"/>
        <dbReference type="ChEBI" id="CHEBI:15378"/>
        <dbReference type="ChEBI" id="CHEBI:57856"/>
        <dbReference type="ChEBI" id="CHEBI:59789"/>
        <dbReference type="ChEBI" id="CHEBI:65314"/>
        <dbReference type="ChEBI" id="CHEBI:74486"/>
        <dbReference type="EC" id="2.1.1.177"/>
    </reaction>
</comment>
<comment type="subunit">
    <text evidence="1">Homodimer.</text>
</comment>
<comment type="subcellular location">
    <subcellularLocation>
        <location evidence="1">Cytoplasm</location>
    </subcellularLocation>
</comment>
<comment type="similarity">
    <text evidence="1">Belongs to the RNA methyltransferase RlmH family.</text>
</comment>
<protein>
    <recommendedName>
        <fullName evidence="1">Ribosomal RNA large subunit methyltransferase H</fullName>
        <ecNumber evidence="1">2.1.1.177</ecNumber>
    </recommendedName>
    <alternativeName>
        <fullName evidence="1">23S rRNA (pseudouridine1915-N3)-methyltransferase</fullName>
    </alternativeName>
    <alternativeName>
        <fullName evidence="1">23S rRNA m3Psi1915 methyltransferase</fullName>
    </alternativeName>
    <alternativeName>
        <fullName evidence="1">rRNA (pseudouridine-N3-)-methyltransferase RlmH</fullName>
    </alternativeName>
</protein>
<keyword id="KW-0963">Cytoplasm</keyword>
<keyword id="KW-0489">Methyltransferase</keyword>
<keyword id="KW-0698">rRNA processing</keyword>
<keyword id="KW-0949">S-adenosyl-L-methionine</keyword>
<keyword id="KW-0808">Transferase</keyword>
<sequence length="156" mass="17520">MKLQLVAVGTKMPDWVQTGFIEYLRRFPKDMPFELAEIPAGKRGKNADIKRILEKEGELMLAAVGKNNRIVTLDIPGTPWETPQLAQQLERWKQDGRDVSLLIGGPEGLAPACKAAAEQSWSLSPLTLPHPLVRVLVAESLYRAWSITTNHPYHRE</sequence>
<reference key="1">
    <citation type="journal article" date="2006" name="J. Bacteriol.">
        <title>Complete genome sequence of Yersinia pestis strains Antiqua and Nepal516: evidence of gene reduction in an emerging pathogen.</title>
        <authorList>
            <person name="Chain P.S.G."/>
            <person name="Hu P."/>
            <person name="Malfatti S.A."/>
            <person name="Radnedge L."/>
            <person name="Larimer F."/>
            <person name="Vergez L.M."/>
            <person name="Worsham P."/>
            <person name="Chu M.C."/>
            <person name="Andersen G.L."/>
        </authorList>
    </citation>
    <scope>NUCLEOTIDE SEQUENCE [LARGE SCALE GENOMIC DNA]</scope>
    <source>
        <strain>Nepal516</strain>
    </source>
</reference>
<reference key="2">
    <citation type="submission" date="2009-04" db="EMBL/GenBank/DDBJ databases">
        <title>Yersinia pestis Nepal516A whole genome shotgun sequencing project.</title>
        <authorList>
            <person name="Plunkett G. III"/>
            <person name="Anderson B.D."/>
            <person name="Baumler D.J."/>
            <person name="Burland V."/>
            <person name="Cabot E.L."/>
            <person name="Glasner J.D."/>
            <person name="Mau B."/>
            <person name="Neeno-Eckwall E."/>
            <person name="Perna N.T."/>
            <person name="Munk A.C."/>
            <person name="Tapia R."/>
            <person name="Green L.D."/>
            <person name="Rogers Y.C."/>
            <person name="Detter J.C."/>
            <person name="Bruce D.C."/>
            <person name="Brettin T.S."/>
        </authorList>
    </citation>
    <scope>NUCLEOTIDE SEQUENCE [LARGE SCALE GENOMIC DNA]</scope>
    <source>
        <strain>Nepal516</strain>
    </source>
</reference>
<feature type="chain" id="PRO_0000260633" description="Ribosomal RNA large subunit methyltransferase H">
    <location>
        <begin position="1"/>
        <end position="156"/>
    </location>
</feature>
<feature type="binding site" evidence="1">
    <location>
        <position position="73"/>
    </location>
    <ligand>
        <name>S-adenosyl-L-methionine</name>
        <dbReference type="ChEBI" id="CHEBI:59789"/>
    </ligand>
</feature>
<feature type="binding site" evidence="1">
    <location>
        <position position="104"/>
    </location>
    <ligand>
        <name>S-adenosyl-L-methionine</name>
        <dbReference type="ChEBI" id="CHEBI:59789"/>
    </ligand>
</feature>
<feature type="binding site" evidence="1">
    <location>
        <begin position="123"/>
        <end position="128"/>
    </location>
    <ligand>
        <name>S-adenosyl-L-methionine</name>
        <dbReference type="ChEBI" id="CHEBI:59789"/>
    </ligand>
</feature>
<name>RLMH_YERPN</name>
<evidence type="ECO:0000255" key="1">
    <source>
        <dbReference type="HAMAP-Rule" id="MF_00658"/>
    </source>
</evidence>
<dbReference type="EC" id="2.1.1.177" evidence="1"/>
<dbReference type="EMBL" id="CP000305">
    <property type="protein sequence ID" value="ABG17421.1"/>
    <property type="molecule type" value="Genomic_DNA"/>
</dbReference>
<dbReference type="EMBL" id="ACNQ01000008">
    <property type="protein sequence ID" value="EEO77514.1"/>
    <property type="molecule type" value="Genomic_DNA"/>
</dbReference>
<dbReference type="RefSeq" id="WP_002210328.1">
    <property type="nucleotide sequence ID" value="NZ_ACNQ01000008.1"/>
</dbReference>
<dbReference type="SMR" id="Q1CKQ9"/>
<dbReference type="GeneID" id="57976090"/>
<dbReference type="KEGG" id="ypn:YPN_1090"/>
<dbReference type="HOGENOM" id="CLU_100552_1_0_6"/>
<dbReference type="Proteomes" id="UP000008936">
    <property type="component" value="Chromosome"/>
</dbReference>
<dbReference type="GO" id="GO:0005737">
    <property type="term" value="C:cytoplasm"/>
    <property type="evidence" value="ECO:0007669"/>
    <property type="project" value="UniProtKB-SubCell"/>
</dbReference>
<dbReference type="GO" id="GO:0070038">
    <property type="term" value="F:rRNA (pseudouridine-N3-)-methyltransferase activity"/>
    <property type="evidence" value="ECO:0007669"/>
    <property type="project" value="UniProtKB-UniRule"/>
</dbReference>
<dbReference type="CDD" id="cd18081">
    <property type="entry name" value="RlmH-like"/>
    <property type="match status" value="1"/>
</dbReference>
<dbReference type="FunFam" id="3.40.1280.10:FF:000004">
    <property type="entry name" value="Ribosomal RNA large subunit methyltransferase H"/>
    <property type="match status" value="1"/>
</dbReference>
<dbReference type="Gene3D" id="3.40.1280.10">
    <property type="match status" value="1"/>
</dbReference>
<dbReference type="HAMAP" id="MF_00658">
    <property type="entry name" value="23SrRNA_methyltr_H"/>
    <property type="match status" value="1"/>
</dbReference>
<dbReference type="InterPro" id="IPR029028">
    <property type="entry name" value="Alpha/beta_knot_MTases"/>
</dbReference>
<dbReference type="InterPro" id="IPR003742">
    <property type="entry name" value="RlmH-like"/>
</dbReference>
<dbReference type="InterPro" id="IPR029026">
    <property type="entry name" value="tRNA_m1G_MTases_N"/>
</dbReference>
<dbReference type="NCBIfam" id="NF000984">
    <property type="entry name" value="PRK00103.1-1"/>
    <property type="match status" value="1"/>
</dbReference>
<dbReference type="NCBIfam" id="NF000986">
    <property type="entry name" value="PRK00103.1-4"/>
    <property type="match status" value="1"/>
</dbReference>
<dbReference type="NCBIfam" id="TIGR00246">
    <property type="entry name" value="tRNA_RlmH_YbeA"/>
    <property type="match status" value="1"/>
</dbReference>
<dbReference type="PANTHER" id="PTHR33603">
    <property type="entry name" value="METHYLTRANSFERASE"/>
    <property type="match status" value="1"/>
</dbReference>
<dbReference type="PANTHER" id="PTHR33603:SF1">
    <property type="entry name" value="RIBOSOMAL RNA LARGE SUBUNIT METHYLTRANSFERASE H"/>
    <property type="match status" value="1"/>
</dbReference>
<dbReference type="Pfam" id="PF02590">
    <property type="entry name" value="SPOUT_MTase"/>
    <property type="match status" value="1"/>
</dbReference>
<dbReference type="PIRSF" id="PIRSF004505">
    <property type="entry name" value="MT_bac"/>
    <property type="match status" value="1"/>
</dbReference>
<dbReference type="SUPFAM" id="SSF75217">
    <property type="entry name" value="alpha/beta knot"/>
    <property type="match status" value="1"/>
</dbReference>